<proteinExistence type="evidence at protein level"/>
<sequence>MNPQIRNPMKAMYPGTFYFQFKNLWEANDRNETWLCFTVEGIKRRSVVSWKTGVFRNQVDSETHCHAERCFLSWFCDDILSPNTKYQVTWYTSWSPCPDCAGEVAEFLARHSNVNLTIFTARLYYFQYPCYQEGLRSLSQEGVAVEIMDYEDFKYCWENFVYNDNEPFKPWKGLKTNFRLLKRRLRESLQ</sequence>
<comment type="function">
    <text evidence="5 6 7 9 11 12">DNA deaminase (cytidine deaminase) which acts as an inhibitor of retrovirus replication and retrotransposon mobility via deaminase-dependent and -independent mechanisms. After the penetration of retroviral nucleocapsids into target cells of infection and the initiation of reverse transcription, it can induce the conversion of cytosine to uracil in the minus-sense single-strand viral DNA, leading to G-to-A hypermutations in the subsequent plus-strand viral DNA. The resultant detrimental levels of mutations in the proviral genome, along with a deamination-independent mechanism that works prior to the proviral integration, together exert efficient antiretroviral effects in infected target cells. Selectively targets single-stranded DNA and does not deaminate double-stranded DNA or single- or double-stranded RNA. Exhibits antiviral activity against simian immunodeficiency virus (SIV), hepatitis B virus (HBV), herpes simplex virus 1 (HHV-1) and Epstein-Barr virus (EBV) and may inhibit the mobility of LTR and non-LTR retrotransposons. May also play a role in the epigenetic regulation of gene expression through the process of active DNA demethylation.</text>
</comment>
<comment type="catalytic activity">
    <reaction>
        <text>a 2'-deoxycytidine in single-stranded DNA + H2O + H(+) = a 2'-deoxyuridine in single-stranded DNA + NH4(+)</text>
        <dbReference type="Rhea" id="RHEA:50948"/>
        <dbReference type="Rhea" id="RHEA-COMP:12846"/>
        <dbReference type="Rhea" id="RHEA-COMP:12847"/>
        <dbReference type="ChEBI" id="CHEBI:15377"/>
        <dbReference type="ChEBI" id="CHEBI:15378"/>
        <dbReference type="ChEBI" id="CHEBI:28938"/>
        <dbReference type="ChEBI" id="CHEBI:85452"/>
        <dbReference type="ChEBI" id="CHEBI:133902"/>
        <dbReference type="EC" id="3.5.4.38"/>
    </reaction>
</comment>
<comment type="cofactor">
    <cofactor evidence="1">
        <name>Zn(2+)</name>
        <dbReference type="ChEBI" id="CHEBI:29105"/>
    </cofactor>
</comment>
<comment type="activity regulation">
    <text evidence="2">(Microbial infection) Antiviral activity is neutralized by the HIV-1 virion infectivity factor (Vif), that prevents its incorporation into progeny HIV-1 virions by both inhibiting its translation and/or by inducing its ubiquitination and subsequent degradation by the 26S proteasome.</text>
</comment>
<comment type="subunit">
    <text evidence="14 15 16">Homodimer (PubMed:22977230, PubMed:23001005). Interacts with TRIB3 (PubMed:22977230). Interacts with AGO2 (PubMed:22915799).</text>
</comment>
<comment type="subunit">
    <text evidence="8">(Microbial infection) Interacts with human foamy virus protein Bet; this interaction does not induce APOBEC3C degradation but prevents its dimerization and incorporation into the virion by binding of Bet close to or within the APOBEC3C dimerization site.</text>
</comment>
<comment type="subunit">
    <text evidence="16">(Microbial infection) Interacts with HIV-1 Vif.</text>
</comment>
<comment type="interaction">
    <interactant intactId="EBI-1044593">
        <id>Q9NRW3</id>
    </interactant>
    <interactant intactId="EBI-11984237">
        <id>Q9Y3Y2-3</id>
        <label>CHTOP</label>
    </interactant>
    <organismsDiffer>false</organismsDiffer>
    <experiments>3</experiments>
</comment>
<comment type="interaction">
    <interactant intactId="EBI-1044593">
        <id>Q9NRW3</id>
    </interactant>
    <interactant intactId="EBI-747421">
        <id>Q03014</id>
        <label>HHEX</label>
    </interactant>
    <organismsDiffer>false</organismsDiffer>
    <experiments>3</experiments>
</comment>
<comment type="interaction">
    <interactant intactId="EBI-1044593">
        <id>Q9NRW3</id>
    </interactant>
    <interactant intactId="EBI-7060731">
        <id>P61978-2</id>
        <label>HNRNPK</label>
    </interactant>
    <organismsDiffer>false</organismsDiffer>
    <experiments>3</experiments>
</comment>
<comment type="interaction">
    <interactant intactId="EBI-1044593">
        <id>Q9NRW3</id>
    </interactant>
    <interactant intactId="EBI-2803328">
        <id>P79522</id>
        <label>PRR3</label>
    </interactant>
    <organismsDiffer>false</organismsDiffer>
    <experiments>3</experiments>
</comment>
<comment type="interaction">
    <interactant intactId="EBI-1044593">
        <id>Q9NRW3</id>
    </interactant>
    <interactant intactId="EBI-743526">
        <id>P38159</id>
        <label>RBMX</label>
    </interactant>
    <organismsDiffer>false</organismsDiffer>
    <experiments>6</experiments>
</comment>
<comment type="interaction">
    <interactant intactId="EBI-1044593">
        <id>Q9NRW3</id>
    </interactant>
    <interactant intactId="EBI-8638511">
        <id>P0DJD3</id>
        <label>RBMY1A1</label>
    </interactant>
    <organismsDiffer>false</organismsDiffer>
    <experiments>3</experiments>
</comment>
<comment type="interaction">
    <interactant intactId="EBI-1044593">
        <id>Q9NRW3</id>
    </interactant>
    <interactant intactId="EBI-8642021">
        <id>Q15415</id>
        <label>RBMY1J</label>
    </interactant>
    <organismsDiffer>false</organismsDiffer>
    <experiments>6</experiments>
</comment>
<comment type="interaction">
    <interactant intactId="EBI-1044593">
        <id>Q9NRW3</id>
    </interactant>
    <interactant intactId="EBI-492476">
        <id>Q96RU7</id>
        <label>TRIB3</label>
    </interactant>
    <organismsDiffer>false</organismsDiffer>
    <experiments>7</experiments>
</comment>
<comment type="interaction">
    <interactant intactId="EBI-1044593">
        <id>Q9NRW3</id>
    </interactant>
    <interactant intactId="EBI-10177272">
        <id>P15622-3</id>
        <label>ZNF250</label>
    </interactant>
    <organismsDiffer>false</organismsDiffer>
    <experiments>3</experiments>
</comment>
<comment type="interaction">
    <interactant intactId="EBI-1044593">
        <id>Q9NRW3</id>
    </interactant>
    <interactant intactId="EBI-347633">
        <id>Q9H9D4</id>
        <label>ZNF408</label>
    </interactant>
    <organismsDiffer>false</organismsDiffer>
    <experiments>3</experiments>
</comment>
<comment type="interaction">
    <interactant intactId="EBI-1044593">
        <id>Q9NRW3</id>
    </interactant>
    <interactant intactId="EBI-12006434">
        <id>Q96MX3</id>
        <label>ZNF48</label>
    </interactant>
    <organismsDiffer>false</organismsDiffer>
    <experiments>4</experiments>
</comment>
<comment type="interaction">
    <interactant intactId="EBI-1044593">
        <id>Q9NRW3</id>
    </interactant>
    <interactant intactId="EBI-745520">
        <id>Q9P0T4</id>
        <label>ZNF581</label>
    </interactant>
    <organismsDiffer>false</organismsDiffer>
    <experiments>3</experiments>
</comment>
<comment type="subcellular location">
    <subcellularLocation>
        <location evidence="13 15">Nucleus</location>
    </subcellularLocation>
    <subcellularLocation>
        <location evidence="13 15">Cytoplasm</location>
    </subcellularLocation>
</comment>
<comment type="tissue specificity">
    <text evidence="4 10">Expressed in spleen, testes, peripherical blood lymphocytes, heart, thymus, prostate and ovary.</text>
</comment>
<comment type="induction">
    <text>Up-regulated by IFN-alpha.</text>
</comment>
<comment type="miscellaneous">
    <text>It is one of seven related genes or pseudogenes found in a cluster, thought to result from gene duplication, on chromosome 22.</text>
</comment>
<comment type="similarity">
    <text evidence="17">Belongs to the cytidine and deoxycytidylate deaminase family.</text>
</comment>
<comment type="sequence caution" evidence="17">
    <conflict type="frameshift">
        <sequence resource="EMBL-CDS" id="AAF86650"/>
    </conflict>
</comment>
<keyword id="KW-0002">3D-structure</keyword>
<keyword id="KW-0051">Antiviral defense</keyword>
<keyword id="KW-0963">Cytoplasm</keyword>
<keyword id="KW-0945">Host-virus interaction</keyword>
<keyword id="KW-0378">Hydrolase</keyword>
<keyword id="KW-0391">Immunity</keyword>
<keyword id="KW-0399">Innate immunity</keyword>
<keyword id="KW-0479">Metal-binding</keyword>
<keyword id="KW-0539">Nucleus</keyword>
<keyword id="KW-1267">Proteomics identification</keyword>
<keyword id="KW-1185">Reference proteome</keyword>
<keyword id="KW-0862">Zinc</keyword>
<protein>
    <recommendedName>
        <fullName>DNA dC-&gt;dU-editing enzyme APOBEC-3C</fullName>
        <shortName>A3C</shortName>
        <ecNumber>3.5.4.38</ecNumber>
    </recommendedName>
    <alternativeName>
        <fullName>APOBEC1-like</fullName>
    </alternativeName>
    <alternativeName>
        <fullName>Phorbolin I</fullName>
    </alternativeName>
</protein>
<accession>Q9NRW3</accession>
<accession>B2R884</accession>
<accession>Q5JZ92</accession>
<accession>Q7Z2N7</accession>
<accession>Q96F12</accession>
<evidence type="ECO:0000250" key="1"/>
<evidence type="ECO:0000250" key="2">
    <source>
        <dbReference type="UniProtKB" id="Q96AK3"/>
    </source>
</evidence>
<evidence type="ECO:0000255" key="3">
    <source>
        <dbReference type="PROSITE-ProRule" id="PRU01083"/>
    </source>
</evidence>
<evidence type="ECO:0000269" key="4">
    <source>
    </source>
</evidence>
<evidence type="ECO:0000269" key="5">
    <source>
    </source>
</evidence>
<evidence type="ECO:0000269" key="6">
    <source>
    </source>
</evidence>
<evidence type="ECO:0000269" key="7">
    <source>
    </source>
</evidence>
<evidence type="ECO:0000269" key="8">
    <source>
    </source>
</evidence>
<evidence type="ECO:0000269" key="9">
    <source>
    </source>
</evidence>
<evidence type="ECO:0000269" key="10">
    <source>
    </source>
</evidence>
<evidence type="ECO:0000269" key="11">
    <source>
    </source>
</evidence>
<evidence type="ECO:0000269" key="12">
    <source>
    </source>
</evidence>
<evidence type="ECO:0000269" key="13">
    <source>
    </source>
</evidence>
<evidence type="ECO:0000269" key="14">
    <source>
    </source>
</evidence>
<evidence type="ECO:0000269" key="15">
    <source>
    </source>
</evidence>
<evidence type="ECO:0000269" key="16">
    <source>
    </source>
</evidence>
<evidence type="ECO:0000305" key="17"/>
<evidence type="ECO:0007744" key="18">
    <source>
        <dbReference type="PDB" id="3VM8"/>
    </source>
</evidence>
<evidence type="ECO:0007744" key="19">
    <source>
        <dbReference type="PDB" id="3VOW"/>
    </source>
</evidence>
<evidence type="ECO:0007829" key="20">
    <source>
        <dbReference type="PDB" id="3VM8"/>
    </source>
</evidence>
<evidence type="ECO:0007829" key="21">
    <source>
        <dbReference type="PDB" id="3VOW"/>
    </source>
</evidence>
<reference key="1">
    <citation type="submission" date="1999-07" db="EMBL/GenBank/DDBJ databases">
        <title>Novel genes expressed in hematopoietic stem/progenitor cells from myelodysplastic syndrome patients.</title>
        <authorList>
            <person name="Gu J."/>
            <person name="Huang Q."/>
            <person name="Yu Y."/>
            <person name="Xu S."/>
            <person name="Wang Y."/>
            <person name="Han Z."/>
            <person name="Chen Z."/>
            <person name="Zhou J."/>
            <person name="Tu Y."/>
            <person name="Gu W."/>
            <person name="Fu G."/>
            <person name="Huang C."/>
        </authorList>
    </citation>
    <scope>NUCLEOTIDE SEQUENCE [LARGE SCALE MRNA]</scope>
    <source>
        <tissue>Hematopoietic stem cell</tissue>
    </source>
</reference>
<reference key="2">
    <citation type="journal article" date="2004" name="Genome Biol.">
        <title>A genome annotation-driven approach to cloning the human ORFeome.</title>
        <authorList>
            <person name="Collins J.E."/>
            <person name="Wright C.L."/>
            <person name="Edwards C.A."/>
            <person name="Davis M.P."/>
            <person name="Grinham J.A."/>
            <person name="Cole C.G."/>
            <person name="Goward M.E."/>
            <person name="Aguado B."/>
            <person name="Mallya M."/>
            <person name="Mokrab Y."/>
            <person name="Huckle E.J."/>
            <person name="Beare D.M."/>
            <person name="Dunham I."/>
        </authorList>
    </citation>
    <scope>NUCLEOTIDE SEQUENCE [LARGE SCALE MRNA]</scope>
</reference>
<reference key="3">
    <citation type="journal article" date="2004" name="Nat. Genet.">
        <title>Complete sequencing and characterization of 21,243 full-length human cDNAs.</title>
        <authorList>
            <person name="Ota T."/>
            <person name="Suzuki Y."/>
            <person name="Nishikawa T."/>
            <person name="Otsuki T."/>
            <person name="Sugiyama T."/>
            <person name="Irie R."/>
            <person name="Wakamatsu A."/>
            <person name="Hayashi K."/>
            <person name="Sato H."/>
            <person name="Nagai K."/>
            <person name="Kimura K."/>
            <person name="Makita H."/>
            <person name="Sekine M."/>
            <person name="Obayashi M."/>
            <person name="Nishi T."/>
            <person name="Shibahara T."/>
            <person name="Tanaka T."/>
            <person name="Ishii S."/>
            <person name="Yamamoto J."/>
            <person name="Saito K."/>
            <person name="Kawai Y."/>
            <person name="Isono Y."/>
            <person name="Nakamura Y."/>
            <person name="Nagahari K."/>
            <person name="Murakami K."/>
            <person name="Yasuda T."/>
            <person name="Iwayanagi T."/>
            <person name="Wagatsuma M."/>
            <person name="Shiratori A."/>
            <person name="Sudo H."/>
            <person name="Hosoiri T."/>
            <person name="Kaku Y."/>
            <person name="Kodaira H."/>
            <person name="Kondo H."/>
            <person name="Sugawara M."/>
            <person name="Takahashi M."/>
            <person name="Kanda K."/>
            <person name="Yokoi T."/>
            <person name="Furuya T."/>
            <person name="Kikkawa E."/>
            <person name="Omura Y."/>
            <person name="Abe K."/>
            <person name="Kamihara K."/>
            <person name="Katsuta N."/>
            <person name="Sato K."/>
            <person name="Tanikawa M."/>
            <person name="Yamazaki M."/>
            <person name="Ninomiya K."/>
            <person name="Ishibashi T."/>
            <person name="Yamashita H."/>
            <person name="Murakawa K."/>
            <person name="Fujimori K."/>
            <person name="Tanai H."/>
            <person name="Kimata M."/>
            <person name="Watanabe M."/>
            <person name="Hiraoka S."/>
            <person name="Chiba Y."/>
            <person name="Ishida S."/>
            <person name="Ono Y."/>
            <person name="Takiguchi S."/>
            <person name="Watanabe S."/>
            <person name="Yosida M."/>
            <person name="Hotuta T."/>
            <person name="Kusano J."/>
            <person name="Kanehori K."/>
            <person name="Takahashi-Fujii A."/>
            <person name="Hara H."/>
            <person name="Tanase T.-O."/>
            <person name="Nomura Y."/>
            <person name="Togiya S."/>
            <person name="Komai F."/>
            <person name="Hara R."/>
            <person name="Takeuchi K."/>
            <person name="Arita M."/>
            <person name="Imose N."/>
            <person name="Musashino K."/>
            <person name="Yuuki H."/>
            <person name="Oshima A."/>
            <person name="Sasaki N."/>
            <person name="Aotsuka S."/>
            <person name="Yoshikawa Y."/>
            <person name="Matsunawa H."/>
            <person name="Ichihara T."/>
            <person name="Shiohata N."/>
            <person name="Sano S."/>
            <person name="Moriya S."/>
            <person name="Momiyama H."/>
            <person name="Satoh N."/>
            <person name="Takami S."/>
            <person name="Terashima Y."/>
            <person name="Suzuki O."/>
            <person name="Nakagawa S."/>
            <person name="Senoh A."/>
            <person name="Mizoguchi H."/>
            <person name="Goto Y."/>
            <person name="Shimizu F."/>
            <person name="Wakebe H."/>
            <person name="Hishigaki H."/>
            <person name="Watanabe T."/>
            <person name="Sugiyama A."/>
            <person name="Takemoto M."/>
            <person name="Kawakami B."/>
            <person name="Yamazaki M."/>
            <person name="Watanabe K."/>
            <person name="Kumagai A."/>
            <person name="Itakura S."/>
            <person name="Fukuzumi Y."/>
            <person name="Fujimori Y."/>
            <person name="Komiyama M."/>
            <person name="Tashiro H."/>
            <person name="Tanigami A."/>
            <person name="Fujiwara T."/>
            <person name="Ono T."/>
            <person name="Yamada K."/>
            <person name="Fujii Y."/>
            <person name="Ozaki K."/>
            <person name="Hirao M."/>
            <person name="Ohmori Y."/>
            <person name="Kawabata A."/>
            <person name="Hikiji T."/>
            <person name="Kobatake N."/>
            <person name="Inagaki H."/>
            <person name="Ikema Y."/>
            <person name="Okamoto S."/>
            <person name="Okitani R."/>
            <person name="Kawakami T."/>
            <person name="Noguchi S."/>
            <person name="Itoh T."/>
            <person name="Shigeta K."/>
            <person name="Senba T."/>
            <person name="Matsumura K."/>
            <person name="Nakajima Y."/>
            <person name="Mizuno T."/>
            <person name="Morinaga M."/>
            <person name="Sasaki M."/>
            <person name="Togashi T."/>
            <person name="Oyama M."/>
            <person name="Hata H."/>
            <person name="Watanabe M."/>
            <person name="Komatsu T."/>
            <person name="Mizushima-Sugano J."/>
            <person name="Satoh T."/>
            <person name="Shirai Y."/>
            <person name="Takahashi Y."/>
            <person name="Nakagawa K."/>
            <person name="Okumura K."/>
            <person name="Nagase T."/>
            <person name="Nomura N."/>
            <person name="Kikuchi H."/>
            <person name="Masuho Y."/>
            <person name="Yamashita R."/>
            <person name="Nakai K."/>
            <person name="Yada T."/>
            <person name="Nakamura Y."/>
            <person name="Ohara O."/>
            <person name="Isogai T."/>
            <person name="Sugano S."/>
        </authorList>
    </citation>
    <scope>NUCLEOTIDE SEQUENCE [LARGE SCALE MRNA]</scope>
</reference>
<reference key="4">
    <citation type="journal article" date="1999" name="Nature">
        <title>The DNA sequence of human chromosome 22.</title>
        <authorList>
            <person name="Dunham I."/>
            <person name="Hunt A.R."/>
            <person name="Collins J.E."/>
            <person name="Bruskiewich R."/>
            <person name="Beare D.M."/>
            <person name="Clamp M."/>
            <person name="Smink L.J."/>
            <person name="Ainscough R."/>
            <person name="Almeida J.P."/>
            <person name="Babbage A.K."/>
            <person name="Bagguley C."/>
            <person name="Bailey J."/>
            <person name="Barlow K.F."/>
            <person name="Bates K.N."/>
            <person name="Beasley O.P."/>
            <person name="Bird C.P."/>
            <person name="Blakey S.E."/>
            <person name="Bridgeman A.M."/>
            <person name="Buck D."/>
            <person name="Burgess J."/>
            <person name="Burrill W.D."/>
            <person name="Burton J."/>
            <person name="Carder C."/>
            <person name="Carter N.P."/>
            <person name="Chen Y."/>
            <person name="Clark G."/>
            <person name="Clegg S.M."/>
            <person name="Cobley V.E."/>
            <person name="Cole C.G."/>
            <person name="Collier R.E."/>
            <person name="Connor R."/>
            <person name="Conroy D."/>
            <person name="Corby N.R."/>
            <person name="Coville G.J."/>
            <person name="Cox A.V."/>
            <person name="Davis J."/>
            <person name="Dawson E."/>
            <person name="Dhami P.D."/>
            <person name="Dockree C."/>
            <person name="Dodsworth S.J."/>
            <person name="Durbin R.M."/>
            <person name="Ellington A.G."/>
            <person name="Evans K.L."/>
            <person name="Fey J.M."/>
            <person name="Fleming K."/>
            <person name="French L."/>
            <person name="Garner A.A."/>
            <person name="Gilbert J.G.R."/>
            <person name="Goward M.E."/>
            <person name="Grafham D.V."/>
            <person name="Griffiths M.N.D."/>
            <person name="Hall C."/>
            <person name="Hall R.E."/>
            <person name="Hall-Tamlyn G."/>
            <person name="Heathcott R.W."/>
            <person name="Ho S."/>
            <person name="Holmes S."/>
            <person name="Hunt S.E."/>
            <person name="Jones M.C."/>
            <person name="Kershaw J."/>
            <person name="Kimberley A.M."/>
            <person name="King A."/>
            <person name="Laird G.K."/>
            <person name="Langford C.F."/>
            <person name="Leversha M.A."/>
            <person name="Lloyd C."/>
            <person name="Lloyd D.M."/>
            <person name="Martyn I.D."/>
            <person name="Mashreghi-Mohammadi M."/>
            <person name="Matthews L.H."/>
            <person name="Mccann O.T."/>
            <person name="Mcclay J."/>
            <person name="Mclaren S."/>
            <person name="McMurray A.A."/>
            <person name="Milne S.A."/>
            <person name="Mortimore B.J."/>
            <person name="Odell C.N."/>
            <person name="Pavitt R."/>
            <person name="Pearce A.V."/>
            <person name="Pearson D."/>
            <person name="Phillimore B.J.C.T."/>
            <person name="Phillips S.H."/>
            <person name="Plumb R.W."/>
            <person name="Ramsay H."/>
            <person name="Ramsey Y."/>
            <person name="Rogers L."/>
            <person name="Ross M.T."/>
            <person name="Scott C.E."/>
            <person name="Sehra H.K."/>
            <person name="Skuce C.D."/>
            <person name="Smalley S."/>
            <person name="Smith M.L."/>
            <person name="Soderlund C."/>
            <person name="Spragon L."/>
            <person name="Steward C.A."/>
            <person name="Sulston J.E."/>
            <person name="Swann R.M."/>
            <person name="Vaudin M."/>
            <person name="Wall M."/>
            <person name="Wallis J.M."/>
            <person name="Whiteley M.N."/>
            <person name="Willey D.L."/>
            <person name="Williams L."/>
            <person name="Williams S.A."/>
            <person name="Williamson H."/>
            <person name="Wilmer T.E."/>
            <person name="Wilming L."/>
            <person name="Wright C.L."/>
            <person name="Hubbard T."/>
            <person name="Bentley D.R."/>
            <person name="Beck S."/>
            <person name="Rogers J."/>
            <person name="Shimizu N."/>
            <person name="Minoshima S."/>
            <person name="Kawasaki K."/>
            <person name="Sasaki T."/>
            <person name="Asakawa S."/>
            <person name="Kudoh J."/>
            <person name="Shintani A."/>
            <person name="Shibuya K."/>
            <person name="Yoshizaki Y."/>
            <person name="Aoki N."/>
            <person name="Mitsuyama S."/>
            <person name="Roe B.A."/>
            <person name="Chen F."/>
            <person name="Chu L."/>
            <person name="Crabtree J."/>
            <person name="Deschamps S."/>
            <person name="Do A."/>
            <person name="Do T."/>
            <person name="Dorman A."/>
            <person name="Fang F."/>
            <person name="Fu Y."/>
            <person name="Hu P."/>
            <person name="Hua A."/>
            <person name="Kenton S."/>
            <person name="Lai H."/>
            <person name="Lao H.I."/>
            <person name="Lewis J."/>
            <person name="Lewis S."/>
            <person name="Lin S.-P."/>
            <person name="Loh P."/>
            <person name="Malaj E."/>
            <person name="Nguyen T."/>
            <person name="Pan H."/>
            <person name="Phan S."/>
            <person name="Qi S."/>
            <person name="Qian Y."/>
            <person name="Ray L."/>
            <person name="Ren Q."/>
            <person name="Shaull S."/>
            <person name="Sloan D."/>
            <person name="Song L."/>
            <person name="Wang Q."/>
            <person name="Wang Y."/>
            <person name="Wang Z."/>
            <person name="White J."/>
            <person name="Willingham D."/>
            <person name="Wu H."/>
            <person name="Yao Z."/>
            <person name="Zhan M."/>
            <person name="Zhang G."/>
            <person name="Chissoe S."/>
            <person name="Murray J."/>
            <person name="Miller N."/>
            <person name="Minx P."/>
            <person name="Fulton R."/>
            <person name="Johnson D."/>
            <person name="Bemis G."/>
            <person name="Bentley D."/>
            <person name="Bradshaw H."/>
            <person name="Bourne S."/>
            <person name="Cordes M."/>
            <person name="Du Z."/>
            <person name="Fulton L."/>
            <person name="Goela D."/>
            <person name="Graves T."/>
            <person name="Hawkins J."/>
            <person name="Hinds K."/>
            <person name="Kemp K."/>
            <person name="Latreille P."/>
            <person name="Layman D."/>
            <person name="Ozersky P."/>
            <person name="Rohlfing T."/>
            <person name="Scheet P."/>
            <person name="Walker C."/>
            <person name="Wamsley A."/>
            <person name="Wohldmann P."/>
            <person name="Pepin K."/>
            <person name="Nelson J."/>
            <person name="Korf I."/>
            <person name="Bedell J.A."/>
            <person name="Hillier L.W."/>
            <person name="Mardis E."/>
            <person name="Waterston R."/>
            <person name="Wilson R."/>
            <person name="Emanuel B.S."/>
            <person name="Shaikh T."/>
            <person name="Kurahashi H."/>
            <person name="Saitta S."/>
            <person name="Budarf M.L."/>
            <person name="McDermid H.E."/>
            <person name="Johnson A."/>
            <person name="Wong A.C.C."/>
            <person name="Morrow B.E."/>
            <person name="Edelmann L."/>
            <person name="Kim U.J."/>
            <person name="Shizuya H."/>
            <person name="Simon M.I."/>
            <person name="Dumanski J.P."/>
            <person name="Peyrard M."/>
            <person name="Kedra D."/>
            <person name="Seroussi E."/>
            <person name="Fransson I."/>
            <person name="Tapia I."/>
            <person name="Bruder C.E."/>
            <person name="O'Brien K.P."/>
            <person name="Wilkinson P."/>
            <person name="Bodenteich A."/>
            <person name="Hartman K."/>
            <person name="Hu X."/>
            <person name="Khan A.S."/>
            <person name="Lane L."/>
            <person name="Tilahun Y."/>
            <person name="Wright H."/>
        </authorList>
    </citation>
    <scope>NUCLEOTIDE SEQUENCE [LARGE SCALE GENOMIC DNA]</scope>
</reference>
<reference key="5">
    <citation type="submission" date="2005-07" db="EMBL/GenBank/DDBJ databases">
        <authorList>
            <person name="Mural R.J."/>
            <person name="Istrail S."/>
            <person name="Sutton G.G."/>
            <person name="Florea L."/>
            <person name="Halpern A.L."/>
            <person name="Mobarry C.M."/>
            <person name="Lippert R."/>
            <person name="Walenz B."/>
            <person name="Shatkay H."/>
            <person name="Dew I."/>
            <person name="Miller J.R."/>
            <person name="Flanigan M.J."/>
            <person name="Edwards N.J."/>
            <person name="Bolanos R."/>
            <person name="Fasulo D."/>
            <person name="Halldorsson B.V."/>
            <person name="Hannenhalli S."/>
            <person name="Turner R."/>
            <person name="Yooseph S."/>
            <person name="Lu F."/>
            <person name="Nusskern D.R."/>
            <person name="Shue B.C."/>
            <person name="Zheng X.H."/>
            <person name="Zhong F."/>
            <person name="Delcher A.L."/>
            <person name="Huson D.H."/>
            <person name="Kravitz S.A."/>
            <person name="Mouchard L."/>
            <person name="Reinert K."/>
            <person name="Remington K.A."/>
            <person name="Clark A.G."/>
            <person name="Waterman M.S."/>
            <person name="Eichler E.E."/>
            <person name="Adams M.D."/>
            <person name="Hunkapiller M.W."/>
            <person name="Myers E.W."/>
            <person name="Venter J.C."/>
        </authorList>
    </citation>
    <scope>NUCLEOTIDE SEQUENCE [LARGE SCALE GENOMIC DNA]</scope>
</reference>
<reference key="6">
    <citation type="journal article" date="2004" name="Genome Res.">
        <title>The status, quality, and expansion of the NIH full-length cDNA project: the Mammalian Gene Collection (MGC).</title>
        <authorList>
            <consortium name="The MGC Project Team"/>
        </authorList>
    </citation>
    <scope>NUCLEOTIDE SEQUENCE [LARGE SCALE MRNA]</scope>
</reference>
<reference key="7">
    <citation type="journal article" date="2002" name="Genomics">
        <title>An anthropoid-specific locus of orphan C to U RNA-editing enzymes on chromosome 22.</title>
        <authorList>
            <person name="Jarmuz A."/>
            <person name="Chester A."/>
            <person name="Bayliss J."/>
            <person name="Gisbourne J."/>
            <person name="Dunham I."/>
            <person name="Scott J."/>
            <person name="Navaratnam N."/>
        </authorList>
    </citation>
    <scope>GENE FAMILY ORGANIZATION</scope>
    <scope>TISSUE SPECIFICITY</scope>
</reference>
<reference key="8">
    <citation type="journal article" date="2003" name="Cell">
        <title>Species-specific exclusion of APOBEC3G from HIV-1 virions by Vif.</title>
        <authorList>
            <person name="Mariani R."/>
            <person name="Chen D."/>
            <person name="Schroefelbauer B."/>
            <person name="Navarro F."/>
            <person name="Koenig R."/>
            <person name="Bollman B."/>
            <person name="Muenk C."/>
            <person name="Nymark-McMahon H."/>
            <person name="Landau N.R."/>
        </authorList>
    </citation>
    <scope>FUNCTION IN HIV-1 INFECTIVITY</scope>
</reference>
<reference key="9">
    <citation type="journal article" date="2004" name="J. Biol. Chem.">
        <title>APOBEC3B and APOBEC3C are potent inhibitors of simian immunodeficiency virus replication.</title>
        <authorList>
            <person name="Yu Q."/>
            <person name="Chen D."/>
            <person name="Koenig R."/>
            <person name="Mariani R."/>
            <person name="Unutmaz D."/>
            <person name="Landau N.R."/>
        </authorList>
    </citation>
    <scope>FUNCTION IN SIV RESTRICTION</scope>
</reference>
<reference key="10">
    <citation type="journal article" date="2006" name="Curr. Biol.">
        <title>APOBEC3A is a potent inhibitor of adeno-associated virus and retrotransposons.</title>
        <authorList>
            <person name="Chen H."/>
            <person name="Lilley C.E."/>
            <person name="Yu Q."/>
            <person name="Lee D.V."/>
            <person name="Chou J."/>
            <person name="Narvaiza I."/>
            <person name="Landau N.R."/>
            <person name="Weitzman M.D."/>
        </authorList>
    </citation>
    <scope>FUNCTION IN RETROTRANSPOSITION</scope>
</reference>
<reference key="11">
    <citation type="journal article" date="2008" name="Annu. Rev. Immunol.">
        <title>The APOBEC3 cytidine deaminases: an innate defensive network opposing exogenous retroviruses and endogenous retroelements.</title>
        <authorList>
            <person name="Chiu Y.L."/>
            <person name="Greene W.C."/>
        </authorList>
    </citation>
    <scope>REVIEW</scope>
</reference>
<reference key="12">
    <citation type="journal article" date="2008" name="Curr. Opin. Infect. Dis.">
        <title>Hepatitis B: modern concepts in pathogenesis--APOBEC3 cytidine deaminases as effectors in innate immunity against the hepatitis B virus.</title>
        <authorList>
            <person name="Bonvin M."/>
            <person name="Greeve J."/>
        </authorList>
    </citation>
    <scope>REVIEW ON FUNCTION IN HBV RESTRICTION</scope>
</reference>
<reference key="13">
    <citation type="journal article" date="2009" name="J. Biol. Chem.">
        <title>Species-specific inhibition of APOBEC3C by the prototype foamy virus protein bet.</title>
        <authorList>
            <person name="Perkovic M."/>
            <person name="Schmidt S."/>
            <person name="Marino D."/>
            <person name="Russell R.A."/>
            <person name="Stauch B."/>
            <person name="Hofmann H."/>
            <person name="Kopietz F."/>
            <person name="Kloke B.-P."/>
            <person name="Zielonka J."/>
            <person name="Stroever H."/>
            <person name="Hermle J."/>
            <person name="Lindemann D."/>
            <person name="Pathak V.K."/>
            <person name="Schneider G."/>
            <person name="Loechelt M."/>
            <person name="Cichutek K."/>
            <person name="Muenk C."/>
        </authorList>
    </citation>
    <scope>INTERACTION WITH HUMAN FOAMY VIRUS PROTEIN BET (MICROBIAL INFECTION)</scope>
    <scope>BET-INTERACTING REGION (MICROBIAL INFECTION)</scope>
</reference>
<reference key="14">
    <citation type="journal article" date="2010" name="Nat. Struct. Mol. Biol.">
        <title>APOBEC3 proteins mediate the clearance of foreign DNA from human cells.</title>
        <authorList>
            <person name="Stenglein M.D."/>
            <person name="Burns M.B."/>
            <person name="Li M."/>
            <person name="Lengyel J."/>
            <person name="Harris R.S."/>
        </authorList>
    </citation>
    <scope>FUNCTION IN RETROTRANSPOSITION</scope>
</reference>
<reference key="15">
    <citation type="journal article" date="2010" name="Nucleic Acids Res.">
        <title>Quantitative profiling of the full APOBEC3 mRNA repertoire in lymphocytes and tissues: implications for HIV-1 restriction.</title>
        <authorList>
            <person name="Refsland E.W."/>
            <person name="Stenglein M.D."/>
            <person name="Shindo K."/>
            <person name="Albin J.S."/>
            <person name="Brown W.L."/>
            <person name="Harris R.S."/>
        </authorList>
    </citation>
    <scope>TISSUE SPECIFICITY</scope>
</reference>
<reference key="16">
    <citation type="journal article" date="2011" name="Cell">
        <title>Hydroxylation of 5-methylcytosine by TET1 promotes active DNA demethylation in the adult brain.</title>
        <authorList>
            <person name="Guo J.U."/>
            <person name="Su Y."/>
            <person name="Zhong C."/>
            <person name="Ming G.L."/>
            <person name="Song H."/>
        </authorList>
    </citation>
    <scope>FUNCTION IN DNA DEMETHYLATION</scope>
</reference>
<reference key="17">
    <citation type="journal article" date="2011" name="J. Virol.">
        <title>Genetic editing of herpes simplex virus 1 and Epstein-Barr herpesvirus genomes by human APOBEC3 cytidine deaminases in culture and in vivo.</title>
        <authorList>
            <person name="Suspene R."/>
            <person name="Aynaud M.M."/>
            <person name="Koch S."/>
            <person name="Pasdeloup D."/>
            <person name="Labetoulle M."/>
            <person name="Gaertner B."/>
            <person name="Vartanian J.P."/>
            <person name="Meyerhans A."/>
            <person name="Wain-Hobson S."/>
        </authorList>
    </citation>
    <scope>FUNCTION IN EBV AND HHV-1 INHIBITION</scope>
</reference>
<reference key="18">
    <citation type="journal article" date="2011" name="J. Virol.">
        <title>Human and rhesus APOBEC3D, APOBEC3F, APOBEC3G, and APOBEC3H demonstrate a conserved capacity to restrict Vif-deficient HIV-1.</title>
        <authorList>
            <person name="Hultquist J.F."/>
            <person name="Lengyel J.A."/>
            <person name="Refsland E.W."/>
            <person name="LaRue R.S."/>
            <person name="Lackey L."/>
            <person name="Brown W.L."/>
            <person name="Harris R.S."/>
        </authorList>
    </citation>
    <scope>SUBCELLULAR LOCATION</scope>
</reference>
<reference key="19">
    <citation type="journal article" date="2011" name="Student Perspec. Contemp. Virol.">
        <title>Cytosine deaminases APOBEC3A, APOBEC3C, and APOBEC3H: Current understanding of their functional roles.</title>
        <authorList>
            <person name="Love R."/>
        </authorList>
    </citation>
    <scope>REVIEW</scope>
</reference>
<reference key="20">
    <citation type="journal article" date="2012" name="Front. Microbiol.">
        <title>Retroelements versus APOBEC3 family members: No great escape from the magnificent seven.</title>
        <authorList>
            <person name="Arias J.F."/>
            <person name="Koyama T."/>
            <person name="Kinomoto M."/>
            <person name="Tokunaga K."/>
        </authorList>
    </citation>
    <scope>REVIEW</scope>
</reference>
<reference key="21">
    <citation type="journal article" date="2012" name="J. Biol. Chem.">
        <title>Human Tribbles 3 protects nuclear DNA from cytidine deamination by APOBEC3A.</title>
        <authorList>
            <person name="Aynaud M.M."/>
            <person name="Suspene R."/>
            <person name="Vidalain P.O."/>
            <person name="Mussil B."/>
            <person name="Guetard D."/>
            <person name="Tangy F."/>
            <person name="Wain-Hobson S."/>
            <person name="Vartanian J.P."/>
        </authorList>
    </citation>
    <scope>INTERACTION WITH TRIB3</scope>
    <scope>SUBCELLULAR LOCATION</scope>
    <scope>SUBUNIT</scope>
</reference>
<reference key="22">
    <citation type="journal article" date="2012" name="J. Virol.">
        <title>HIV-1 replication and APOBEC3 antiviral activity are not regulated by P bodies.</title>
        <authorList>
            <person name="Phalora P.K."/>
            <person name="Sherer N.M."/>
            <person name="Wolinsky S.M."/>
            <person name="Swanson C.M."/>
            <person name="Malim M.H."/>
        </authorList>
    </citation>
    <scope>INTERACTION WITH AGO2</scope>
</reference>
<reference key="23">
    <citation type="journal article" date="2012" name="Semin. Cell Dev. Biol.">
        <title>Functions and regulation of the APOBEC family of proteins.</title>
        <authorList>
            <person name="Smith H.C."/>
            <person name="Bennett R.P."/>
            <person name="Kizilyer A."/>
            <person name="McDougall W.M."/>
            <person name="Prohaska K.M."/>
        </authorList>
    </citation>
    <scope>REVIEW</scope>
</reference>
<reference evidence="19" key="24">
    <citation type="journal article" date="2012" name="Nat. Struct. Mol. Biol.">
        <title>The APOBEC3C crystal structure and the interface for HIV-1 Vif binding.</title>
        <authorList>
            <person name="Kitamura S."/>
            <person name="Ode H."/>
            <person name="Nakashima M."/>
            <person name="Imahashi M."/>
            <person name="Naganawa Y."/>
            <person name="Kurosawa T."/>
            <person name="Yokomaku Y."/>
            <person name="Yamane T."/>
            <person name="Watanabe N."/>
            <person name="Suzuki A."/>
            <person name="Sugiura W."/>
            <person name="Iwatani Y."/>
        </authorList>
    </citation>
    <scope>X-RAY CRYSTALLOGRAPHY (2.15 ANGSTROMS) IN COMPLEX WITH ZINC</scope>
    <scope>SUBUNIT</scope>
    <scope>INTERACTION WITH HIV-1 VIF (MICROBIAL INFECTION)</scope>
    <scope>MUTAGENESIS OF LEU-72; PHE-75; CYS-76; ILE-79; LEU-80; SER-81; TYR-86; GLU-106; PHE-107; ALA-109; HIS-111; PRO-129 AND GLU-141</scope>
</reference>
<reference evidence="18" key="25">
    <citation type="submission" date="2011-12" db="PDB data bank">
        <title>Crystal structure of the human APOBEC3C having HIV-1 Vif-binding interface.</title>
        <authorList>
            <person name="Kitamura S."/>
            <person name="Ode H."/>
            <person name="Nakashima M."/>
            <person name="Imahashi M."/>
            <person name="Naganawa Y."/>
            <person name="Ibe S."/>
            <person name="Yokomaku Y."/>
            <person name="Watanabe N."/>
            <person name="Suzuki A."/>
            <person name="Sugiura W."/>
            <person name="Iwatani Y."/>
        </authorList>
    </citation>
    <scope>X-RAY CRYSTALLOGRAPHY (3.00 ANGSTROMS) IN COMPLEX WITH ZINC</scope>
</reference>
<dbReference type="EC" id="3.5.4.38"/>
<dbReference type="EMBL" id="AF165520">
    <property type="protein sequence ID" value="AAF86650.1"/>
    <property type="status" value="ALT_FRAME"/>
    <property type="molecule type" value="mRNA"/>
</dbReference>
<dbReference type="EMBL" id="CR456394">
    <property type="protein sequence ID" value="CAG30280.1"/>
    <property type="molecule type" value="mRNA"/>
</dbReference>
<dbReference type="EMBL" id="AK313272">
    <property type="protein sequence ID" value="BAG36081.1"/>
    <property type="molecule type" value="mRNA"/>
</dbReference>
<dbReference type="EMBL" id="AL022318">
    <property type="status" value="NOT_ANNOTATED_CDS"/>
    <property type="molecule type" value="Genomic_DNA"/>
</dbReference>
<dbReference type="EMBL" id="CH471095">
    <property type="protein sequence ID" value="EAW60284.1"/>
    <property type="molecule type" value="Genomic_DNA"/>
</dbReference>
<dbReference type="EMBL" id="BC011739">
    <property type="protein sequence ID" value="AAH11739.1"/>
    <property type="molecule type" value="mRNA"/>
</dbReference>
<dbReference type="EMBL" id="BC021080">
    <property type="status" value="NOT_ANNOTATED_CDS"/>
    <property type="molecule type" value="mRNA"/>
</dbReference>
<dbReference type="CCDS" id="CCDS13983.1"/>
<dbReference type="RefSeq" id="NP_055323.2">
    <property type="nucleotide sequence ID" value="NM_014508.2"/>
</dbReference>
<dbReference type="PDB" id="3VM8">
    <property type="method" value="X-ray"/>
    <property type="resolution" value="3.00 A"/>
    <property type="chains" value="A/B=1-190"/>
</dbReference>
<dbReference type="PDB" id="3VOW">
    <property type="method" value="X-ray"/>
    <property type="resolution" value="2.15 A"/>
    <property type="chains" value="A/B=1-190"/>
</dbReference>
<dbReference type="PDBsum" id="3VM8"/>
<dbReference type="PDBsum" id="3VOW"/>
<dbReference type="SMR" id="Q9NRW3"/>
<dbReference type="BioGRID" id="118162">
    <property type="interactions" value="204"/>
</dbReference>
<dbReference type="DIP" id="DIP-48919N"/>
<dbReference type="FunCoup" id="Q9NRW3">
    <property type="interactions" value="262"/>
</dbReference>
<dbReference type="IntAct" id="Q9NRW3">
    <property type="interactions" value="236"/>
</dbReference>
<dbReference type="MINT" id="Q9NRW3"/>
<dbReference type="STRING" id="9606.ENSP00000355340"/>
<dbReference type="GlyGen" id="Q9NRW3">
    <property type="glycosylation" value="1 site, 1 O-linked glycan (1 site)"/>
</dbReference>
<dbReference type="iPTMnet" id="Q9NRW3"/>
<dbReference type="PhosphoSitePlus" id="Q9NRW3"/>
<dbReference type="SwissPalm" id="Q9NRW3"/>
<dbReference type="BioMuta" id="APOBEC3C"/>
<dbReference type="DMDM" id="48474983"/>
<dbReference type="jPOST" id="Q9NRW3"/>
<dbReference type="MassIVE" id="Q9NRW3"/>
<dbReference type="PaxDb" id="9606-ENSP00000355340"/>
<dbReference type="PeptideAtlas" id="Q9NRW3"/>
<dbReference type="ProteomicsDB" id="82428"/>
<dbReference type="Pumba" id="Q9NRW3"/>
<dbReference type="Antibodypedia" id="35026">
    <property type="antibodies" value="258 antibodies from 32 providers"/>
</dbReference>
<dbReference type="DNASU" id="27350"/>
<dbReference type="Ensembl" id="ENST00000361441.5">
    <property type="protein sequence ID" value="ENSP00000355340.3"/>
    <property type="gene ID" value="ENSG00000244509.4"/>
</dbReference>
<dbReference type="GeneID" id="27350"/>
<dbReference type="KEGG" id="hsa:27350"/>
<dbReference type="MANE-Select" id="ENST00000361441.5">
    <property type="protein sequence ID" value="ENSP00000355340.3"/>
    <property type="RefSeq nucleotide sequence ID" value="NM_014508.3"/>
    <property type="RefSeq protein sequence ID" value="NP_055323.2"/>
</dbReference>
<dbReference type="UCSC" id="uc003awr.4">
    <property type="organism name" value="human"/>
</dbReference>
<dbReference type="AGR" id="HGNC:17353"/>
<dbReference type="CTD" id="27350"/>
<dbReference type="DisGeNET" id="27350"/>
<dbReference type="GeneCards" id="APOBEC3C"/>
<dbReference type="HGNC" id="HGNC:17353">
    <property type="gene designation" value="APOBEC3C"/>
</dbReference>
<dbReference type="HPA" id="ENSG00000244509">
    <property type="expression patterns" value="Low tissue specificity"/>
</dbReference>
<dbReference type="MIM" id="607750">
    <property type="type" value="gene"/>
</dbReference>
<dbReference type="neXtProt" id="NX_Q9NRW3"/>
<dbReference type="OpenTargets" id="ENSG00000244509"/>
<dbReference type="PharmGKB" id="PA24893"/>
<dbReference type="VEuPathDB" id="HostDB:ENSG00000244509"/>
<dbReference type="eggNOG" id="KOG4075">
    <property type="taxonomic scope" value="Eukaryota"/>
</dbReference>
<dbReference type="GeneTree" id="ENSGT00940000162695"/>
<dbReference type="HOGENOM" id="CLU_080056_2_0_1"/>
<dbReference type="InParanoid" id="Q9NRW3"/>
<dbReference type="OMA" id="DLETHCH"/>
<dbReference type="OrthoDB" id="9445293at2759"/>
<dbReference type="PAN-GO" id="Q9NRW3">
    <property type="GO annotations" value="12 GO annotations based on evolutionary models"/>
</dbReference>
<dbReference type="PhylomeDB" id="Q9NRW3"/>
<dbReference type="TreeFam" id="TF331356"/>
<dbReference type="BRENDA" id="3.5.4.38">
    <property type="organism ID" value="2681"/>
</dbReference>
<dbReference type="PathwayCommons" id="Q9NRW3"/>
<dbReference type="Reactome" id="R-HSA-72200">
    <property type="pathway name" value="mRNA Editing: C to U Conversion"/>
</dbReference>
<dbReference type="Reactome" id="R-HSA-75094">
    <property type="pathway name" value="Formation of the Editosome"/>
</dbReference>
<dbReference type="SignaLink" id="Q9NRW3"/>
<dbReference type="SIGNOR" id="Q9NRW3"/>
<dbReference type="BioGRID-ORCS" id="27350">
    <property type="hits" value="20 hits in 1130 CRISPR screens"/>
</dbReference>
<dbReference type="ChiTaRS" id="APOBEC3C">
    <property type="organism name" value="human"/>
</dbReference>
<dbReference type="EvolutionaryTrace" id="Q9NRW3"/>
<dbReference type="GeneWiki" id="APOBEC3C"/>
<dbReference type="GenomeRNAi" id="27350"/>
<dbReference type="Pharos" id="Q9NRW3">
    <property type="development level" value="Tbio"/>
</dbReference>
<dbReference type="PRO" id="PR:Q9NRW3"/>
<dbReference type="Proteomes" id="UP000005640">
    <property type="component" value="Chromosome 22"/>
</dbReference>
<dbReference type="RNAct" id="Q9NRW3">
    <property type="molecule type" value="protein"/>
</dbReference>
<dbReference type="Bgee" id="ENSG00000244509">
    <property type="expression patterns" value="Expressed in leukocyte and 186 other cell types or tissues"/>
</dbReference>
<dbReference type="ExpressionAtlas" id="Q9NRW3">
    <property type="expression patterns" value="baseline and differential"/>
</dbReference>
<dbReference type="GO" id="GO:0005737">
    <property type="term" value="C:cytoplasm"/>
    <property type="evidence" value="ECO:0000314"/>
    <property type="project" value="UniProtKB"/>
</dbReference>
<dbReference type="GO" id="GO:0005634">
    <property type="term" value="C:nucleus"/>
    <property type="evidence" value="ECO:0000314"/>
    <property type="project" value="UniProtKB"/>
</dbReference>
<dbReference type="GO" id="GO:0000932">
    <property type="term" value="C:P-body"/>
    <property type="evidence" value="ECO:0000318"/>
    <property type="project" value="GO_Central"/>
</dbReference>
<dbReference type="GO" id="GO:0004126">
    <property type="term" value="F:cytidine deaminase activity"/>
    <property type="evidence" value="ECO:0000318"/>
    <property type="project" value="GO_Central"/>
</dbReference>
<dbReference type="GO" id="GO:0003723">
    <property type="term" value="F:RNA binding"/>
    <property type="evidence" value="ECO:0007005"/>
    <property type="project" value="UniProtKB"/>
</dbReference>
<dbReference type="GO" id="GO:0008270">
    <property type="term" value="F:zinc ion binding"/>
    <property type="evidence" value="ECO:0007669"/>
    <property type="project" value="InterPro"/>
</dbReference>
<dbReference type="GO" id="GO:0044355">
    <property type="term" value="P:clearance of foreign intracellular DNA"/>
    <property type="evidence" value="ECO:0000314"/>
    <property type="project" value="GO_Central"/>
</dbReference>
<dbReference type="GO" id="GO:0009972">
    <property type="term" value="P:cytidine deamination"/>
    <property type="evidence" value="ECO:0000314"/>
    <property type="project" value="UniProtKB"/>
</dbReference>
<dbReference type="GO" id="GO:0016554">
    <property type="term" value="P:cytidine to uridine editing"/>
    <property type="evidence" value="ECO:0000318"/>
    <property type="project" value="GO_Central"/>
</dbReference>
<dbReference type="GO" id="GO:0051607">
    <property type="term" value="P:defense response to virus"/>
    <property type="evidence" value="ECO:0000318"/>
    <property type="project" value="GO_Central"/>
</dbReference>
<dbReference type="GO" id="GO:0070383">
    <property type="term" value="P:DNA cytosine deamination"/>
    <property type="evidence" value="ECO:0000318"/>
    <property type="project" value="GO_Central"/>
</dbReference>
<dbReference type="GO" id="GO:0045087">
    <property type="term" value="P:innate immune response"/>
    <property type="evidence" value="ECO:0007669"/>
    <property type="project" value="UniProtKB-KW"/>
</dbReference>
<dbReference type="GO" id="GO:0045869">
    <property type="term" value="P:negative regulation of single stranded viral RNA replication via double stranded DNA intermediate"/>
    <property type="evidence" value="ECO:0000318"/>
    <property type="project" value="GO_Central"/>
</dbReference>
<dbReference type="GO" id="GO:0045071">
    <property type="term" value="P:negative regulation of viral genome replication"/>
    <property type="evidence" value="ECO:0000314"/>
    <property type="project" value="UniProtKB"/>
</dbReference>
<dbReference type="GO" id="GO:0044029">
    <property type="term" value="P:positive regulation of gene expression via chromosomal CpG island demethylation"/>
    <property type="evidence" value="ECO:0000314"/>
    <property type="project" value="UniProtKB"/>
</dbReference>
<dbReference type="GO" id="GO:0010526">
    <property type="term" value="P:transposable element silencing"/>
    <property type="evidence" value="ECO:0000314"/>
    <property type="project" value="UniProtKB"/>
</dbReference>
<dbReference type="CDD" id="cd01283">
    <property type="entry name" value="cytidine_deaminase"/>
    <property type="match status" value="1"/>
</dbReference>
<dbReference type="FunFam" id="3.40.140.10:FF:000029">
    <property type="entry name" value="DNA dC-&gt;dU-editing enzyme APOBEC-3G"/>
    <property type="match status" value="1"/>
</dbReference>
<dbReference type="Gene3D" id="3.40.140.10">
    <property type="entry name" value="Cytidine Deaminase, domain 2"/>
    <property type="match status" value="1"/>
</dbReference>
<dbReference type="InterPro" id="IPR016192">
    <property type="entry name" value="APOBEC/CMP_deaminase_Zn-bd"/>
</dbReference>
<dbReference type="InterPro" id="IPR050610">
    <property type="entry name" value="APOBEC_Cyt_Deaminase"/>
</dbReference>
<dbReference type="InterPro" id="IPR002125">
    <property type="entry name" value="CMP_dCMP_dom"/>
</dbReference>
<dbReference type="InterPro" id="IPR016193">
    <property type="entry name" value="Cytidine_deaminase-like"/>
</dbReference>
<dbReference type="PANTHER" id="PTHR13857:SF46">
    <property type="entry name" value="DNA DC-DU-EDITING ENZYME APOBEC-3C"/>
    <property type="match status" value="1"/>
</dbReference>
<dbReference type="PANTHER" id="PTHR13857">
    <property type="entry name" value="MRNA EDITING ENZYME"/>
    <property type="match status" value="1"/>
</dbReference>
<dbReference type="Pfam" id="PF18782">
    <property type="entry name" value="NAD2"/>
    <property type="match status" value="1"/>
</dbReference>
<dbReference type="SUPFAM" id="SSF53927">
    <property type="entry name" value="Cytidine deaminase-like"/>
    <property type="match status" value="1"/>
</dbReference>
<dbReference type="PROSITE" id="PS00903">
    <property type="entry name" value="CYT_DCMP_DEAMINASES_1"/>
    <property type="match status" value="1"/>
</dbReference>
<dbReference type="PROSITE" id="PS51747">
    <property type="entry name" value="CYT_DCMP_DEAMINASES_2"/>
    <property type="match status" value="1"/>
</dbReference>
<name>ABC3C_HUMAN</name>
<gene>
    <name type="primary">APOBEC3C</name>
    <name type="synonym">APOBEC1L</name>
    <name type="synonym">PBI</name>
</gene>
<organism>
    <name type="scientific">Homo sapiens</name>
    <name type="common">Human</name>
    <dbReference type="NCBI Taxonomy" id="9606"/>
    <lineage>
        <taxon>Eukaryota</taxon>
        <taxon>Metazoa</taxon>
        <taxon>Chordata</taxon>
        <taxon>Craniata</taxon>
        <taxon>Vertebrata</taxon>
        <taxon>Euteleostomi</taxon>
        <taxon>Mammalia</taxon>
        <taxon>Eutheria</taxon>
        <taxon>Euarchontoglires</taxon>
        <taxon>Primates</taxon>
        <taxon>Haplorrhini</taxon>
        <taxon>Catarrhini</taxon>
        <taxon>Hominidae</taxon>
        <taxon>Homo</taxon>
    </lineage>
</organism>
<feature type="chain" id="PRO_0000171755" description="DNA dC-&gt;dU-editing enzyme APOBEC-3C">
    <location>
        <begin position="1"/>
        <end position="190"/>
    </location>
</feature>
<feature type="domain" description="CMP/dCMP-type deaminase" evidence="3">
    <location>
        <begin position="29"/>
        <end position="138"/>
    </location>
</feature>
<feature type="region of interest" description="(Microbial infection) Required for interaction with human foamy virus protein Bet" evidence="8">
    <location>
        <begin position="40"/>
        <end position="86"/>
    </location>
</feature>
<feature type="active site" description="Proton donor" evidence="3">
    <location>
        <position position="68"/>
    </location>
</feature>
<feature type="binding site" evidence="18 19">
    <location>
        <position position="66"/>
    </location>
    <ligand>
        <name>Zn(2+)</name>
        <dbReference type="ChEBI" id="CHEBI:29105"/>
        <note>catalytic</note>
    </ligand>
</feature>
<feature type="binding site" evidence="18 19">
    <location>
        <position position="97"/>
    </location>
    <ligand>
        <name>Zn(2+)</name>
        <dbReference type="ChEBI" id="CHEBI:29105"/>
        <note>catalytic</note>
    </ligand>
</feature>
<feature type="binding site" evidence="18 19">
    <location>
        <position position="100"/>
    </location>
    <ligand>
        <name>Zn(2+)</name>
        <dbReference type="ChEBI" id="CHEBI:29105"/>
        <note>catalytic</note>
    </ligand>
</feature>
<feature type="mutagenesis site" description="Resistant to HIV-1 Vif and abolishes Vif binding." evidence="16">
    <original>L</original>
    <variation>D</variation>
    <location>
        <position position="72"/>
    </location>
</feature>
<feature type="mutagenesis site" description="Resistant to HIV-1 Vif and reduces Vif binding." evidence="16">
    <original>F</original>
    <variation>W</variation>
    <location>
        <position position="75"/>
    </location>
</feature>
<feature type="mutagenesis site" description="Resistant to HIV-1 Vif and reduces Vif binding." evidence="16">
    <original>C</original>
    <variation>K</variation>
    <location>
        <position position="76"/>
    </location>
</feature>
<feature type="mutagenesis site" description="Resistant to HIV-1 Vif and reduces Vif binding." evidence="16">
    <original>I</original>
    <variation>A</variation>
    <location>
        <position position="79"/>
    </location>
</feature>
<feature type="mutagenesis site" description="Resistant to HIV-1 Vif and reduces Vif binding." evidence="16">
    <original>L</original>
    <variation>A</variation>
    <location>
        <position position="80"/>
    </location>
</feature>
<feature type="mutagenesis site" description="Resistant to HIV-1 Vif and reduces Vif binding." evidence="16">
    <original>S</original>
    <variation>P</variation>
    <location>
        <position position="81"/>
    </location>
</feature>
<feature type="mutagenesis site" description="Resistant to HIV-1 Vif and abolishes Vif binding." evidence="16">
    <original>Y</original>
    <variation>A</variation>
    <location>
        <position position="86"/>
    </location>
</feature>
<feature type="mutagenesis site" description="Resistant to HIV-1 Vif and reduces Vif binding." evidence="16">
    <original>E</original>
    <variation>K</variation>
    <location>
        <position position="106"/>
    </location>
</feature>
<feature type="mutagenesis site" description="Resistant to HIV-1 Vif and abolishes Vif binding." evidence="16">
    <original>F</original>
    <variation>D</variation>
    <location>
        <position position="107"/>
    </location>
</feature>
<feature type="mutagenesis site" description="Resistant to HIV-1 Vif." evidence="16">
    <original>A</original>
    <variation>K</variation>
    <location>
        <position position="109"/>
    </location>
</feature>
<feature type="mutagenesis site" description="Resistant to HIV-1 Vif and reduces Vif binding." evidence="16">
    <original>H</original>
    <variation>D</variation>
    <location>
        <position position="111"/>
    </location>
</feature>
<feature type="mutagenesis site" description="No effect on Vif binding." evidence="16">
    <original>P</original>
    <variation>A</variation>
    <location>
        <position position="129"/>
    </location>
</feature>
<feature type="mutagenesis site" description="Remains sensitive to HIV-1 Vif but abolishes Vif binding." evidence="16">
    <original>E</original>
    <variation>K</variation>
    <location>
        <position position="141"/>
    </location>
</feature>
<feature type="sequence conflict" description="In Ref. 6; AAH11739." evidence="17" ref="6">
    <original>N</original>
    <variation>D</variation>
    <location>
        <position position="31"/>
    </location>
</feature>
<feature type="helix" evidence="21">
    <location>
        <begin position="14"/>
        <end position="20"/>
    </location>
</feature>
<feature type="turn" evidence="20">
    <location>
        <begin position="27"/>
        <end position="29"/>
    </location>
</feature>
<feature type="strand" evidence="21">
    <location>
        <begin position="32"/>
        <end position="43"/>
    </location>
</feature>
<feature type="strand" evidence="21">
    <location>
        <begin position="46"/>
        <end position="58"/>
    </location>
</feature>
<feature type="helix" evidence="21">
    <location>
        <begin position="63"/>
        <end position="65"/>
    </location>
</feature>
<feature type="helix" evidence="21">
    <location>
        <begin position="67"/>
        <end position="75"/>
    </location>
</feature>
<feature type="strand" evidence="21">
    <location>
        <begin position="84"/>
        <end position="94"/>
    </location>
</feature>
<feature type="helix" evidence="21">
    <location>
        <begin position="98"/>
        <end position="110"/>
    </location>
</feature>
<feature type="strand" evidence="21">
    <location>
        <begin position="114"/>
        <end position="122"/>
    </location>
</feature>
<feature type="turn" evidence="21">
    <location>
        <begin position="124"/>
        <end position="127"/>
    </location>
</feature>
<feature type="helix" evidence="21">
    <location>
        <begin position="129"/>
        <end position="141"/>
    </location>
</feature>
<feature type="strand" evidence="21">
    <location>
        <begin position="144"/>
        <end position="147"/>
    </location>
</feature>
<feature type="helix" evidence="21">
    <location>
        <begin position="150"/>
        <end position="160"/>
    </location>
</feature>
<feature type="helix" evidence="21">
    <location>
        <begin position="174"/>
        <end position="189"/>
    </location>
</feature>